<dbReference type="EMBL" id="AY741371">
    <property type="protein sequence ID" value="AAX13886.1"/>
    <property type="molecule type" value="Genomic_DNA"/>
</dbReference>
<dbReference type="RefSeq" id="YP_277387.1">
    <property type="nucleotide sequence ID" value="NC_007288.1"/>
</dbReference>
<dbReference type="SMR" id="Q4G380"/>
<dbReference type="STRING" id="2903.Q4G380"/>
<dbReference type="GeneID" id="3562471"/>
<dbReference type="GO" id="GO:0009535">
    <property type="term" value="C:chloroplast thylakoid membrane"/>
    <property type="evidence" value="ECO:0007669"/>
    <property type="project" value="UniProtKB-SubCell"/>
</dbReference>
<dbReference type="GO" id="GO:0009539">
    <property type="term" value="C:photosystem II reaction center"/>
    <property type="evidence" value="ECO:0007669"/>
    <property type="project" value="InterPro"/>
</dbReference>
<dbReference type="GO" id="GO:0009055">
    <property type="term" value="F:electron transfer activity"/>
    <property type="evidence" value="ECO:0007669"/>
    <property type="project" value="UniProtKB-UniRule"/>
</dbReference>
<dbReference type="GO" id="GO:0020037">
    <property type="term" value="F:heme binding"/>
    <property type="evidence" value="ECO:0007669"/>
    <property type="project" value="InterPro"/>
</dbReference>
<dbReference type="GO" id="GO:0005506">
    <property type="term" value="F:iron ion binding"/>
    <property type="evidence" value="ECO:0007669"/>
    <property type="project" value="UniProtKB-UniRule"/>
</dbReference>
<dbReference type="GO" id="GO:0009767">
    <property type="term" value="P:photosynthetic electron transport chain"/>
    <property type="evidence" value="ECO:0007669"/>
    <property type="project" value="InterPro"/>
</dbReference>
<dbReference type="Gene3D" id="1.20.5.860">
    <property type="entry name" value="Photosystem II cytochrome b559, alpha subunit"/>
    <property type="match status" value="1"/>
</dbReference>
<dbReference type="HAMAP" id="MF_00642">
    <property type="entry name" value="PSII_PsbE"/>
    <property type="match status" value="1"/>
</dbReference>
<dbReference type="InterPro" id="IPR006217">
    <property type="entry name" value="PSII_cyt_b559_asu"/>
</dbReference>
<dbReference type="InterPro" id="IPR037025">
    <property type="entry name" value="PSII_cyt_b559_asu_sf"/>
</dbReference>
<dbReference type="InterPro" id="IPR006216">
    <property type="entry name" value="PSII_cyt_b559_CS"/>
</dbReference>
<dbReference type="InterPro" id="IPR013081">
    <property type="entry name" value="PSII_cyt_b559_N"/>
</dbReference>
<dbReference type="InterPro" id="IPR013082">
    <property type="entry name" value="PSII_cytb559_asu_lum"/>
</dbReference>
<dbReference type="NCBIfam" id="TIGR01332">
    <property type="entry name" value="cyt_b559_alpha"/>
    <property type="match status" value="1"/>
</dbReference>
<dbReference type="PANTHER" id="PTHR33391">
    <property type="entry name" value="CYTOCHROME B559 SUBUNIT BETA-RELATED"/>
    <property type="match status" value="1"/>
</dbReference>
<dbReference type="PANTHER" id="PTHR33391:SF9">
    <property type="entry name" value="CYTOCHROME B559 SUBUNIT BETA-RELATED"/>
    <property type="match status" value="1"/>
</dbReference>
<dbReference type="Pfam" id="PF00283">
    <property type="entry name" value="Cytochrom_B559"/>
    <property type="match status" value="1"/>
</dbReference>
<dbReference type="Pfam" id="PF00284">
    <property type="entry name" value="Cytochrom_B559a"/>
    <property type="match status" value="1"/>
</dbReference>
<dbReference type="PIRSF" id="PIRSF000036">
    <property type="entry name" value="PsbE"/>
    <property type="match status" value="1"/>
</dbReference>
<dbReference type="SUPFAM" id="SSF161045">
    <property type="entry name" value="Cytochrome b559 subunits"/>
    <property type="match status" value="1"/>
</dbReference>
<dbReference type="PROSITE" id="PS00537">
    <property type="entry name" value="CYTOCHROME_B559"/>
    <property type="match status" value="1"/>
</dbReference>
<organism>
    <name type="scientific">Emiliania huxleyi</name>
    <name type="common">Coccolithophore</name>
    <name type="synonym">Pontosphaera huxleyi</name>
    <dbReference type="NCBI Taxonomy" id="2903"/>
    <lineage>
        <taxon>Eukaryota</taxon>
        <taxon>Haptista</taxon>
        <taxon>Haptophyta</taxon>
        <taxon>Prymnesiophyceae</taxon>
        <taxon>Isochrysidales</taxon>
        <taxon>Noelaerhabdaceae</taxon>
        <taxon>Emiliania</taxon>
    </lineage>
</organism>
<keyword id="KW-0150">Chloroplast</keyword>
<keyword id="KW-0249">Electron transport</keyword>
<keyword id="KW-0349">Heme</keyword>
<keyword id="KW-0408">Iron</keyword>
<keyword id="KW-0472">Membrane</keyword>
<keyword id="KW-0479">Metal-binding</keyword>
<keyword id="KW-0602">Photosynthesis</keyword>
<keyword id="KW-0604">Photosystem II</keyword>
<keyword id="KW-0934">Plastid</keyword>
<keyword id="KW-0793">Thylakoid</keyword>
<keyword id="KW-0812">Transmembrane</keyword>
<keyword id="KW-1133">Transmembrane helix</keyword>
<keyword id="KW-0813">Transport</keyword>
<sequence length="84" mass="9431">MSGGSTGERPFSDIITSIRYWIIHSITIPSLFVAGFLFVSTGLAYDAFGTPRPNEYFTQDRQQIPLVNDRFSAKQELEDLTKGL</sequence>
<evidence type="ECO:0000255" key="1">
    <source>
        <dbReference type="HAMAP-Rule" id="MF_00642"/>
    </source>
</evidence>
<accession>Q4G380</accession>
<proteinExistence type="inferred from homology"/>
<gene>
    <name evidence="1" type="primary">psbE</name>
</gene>
<name>PSBE_EMIHU</name>
<geneLocation type="chloroplast"/>
<feature type="chain" id="PRO_0000233201" description="Cytochrome b559 subunit alpha">
    <location>
        <begin position="1"/>
        <end position="84"/>
    </location>
</feature>
<feature type="transmembrane region" description="Helical" evidence="1">
    <location>
        <begin position="22"/>
        <end position="36"/>
    </location>
</feature>
<feature type="binding site" description="axial binding residue" evidence="1">
    <location>
        <position position="24"/>
    </location>
    <ligand>
        <name>heme</name>
        <dbReference type="ChEBI" id="CHEBI:30413"/>
        <note>ligand shared with beta subunit</note>
    </ligand>
    <ligandPart>
        <name>Fe</name>
        <dbReference type="ChEBI" id="CHEBI:18248"/>
    </ligandPart>
</feature>
<protein>
    <recommendedName>
        <fullName evidence="1">Cytochrome b559 subunit alpha</fullName>
    </recommendedName>
    <alternativeName>
        <fullName evidence="1">PSII reaction center subunit V</fullName>
    </alternativeName>
</protein>
<reference key="1">
    <citation type="journal article" date="2005" name="DNA Res.">
        <title>The complete plastid genome sequence of the haptophyte Emiliania huxleyi: a comparison to other plastid genomes.</title>
        <authorList>
            <person name="Sanchez-Puerta M.V."/>
            <person name="Bachvaroff T.R."/>
            <person name="Delwiche C.F."/>
        </authorList>
    </citation>
    <scope>NUCLEOTIDE SEQUENCE [LARGE SCALE GENOMIC DNA]</scope>
    <source>
        <strain>CCMP373 / CSIRO-CS-57 / BT6</strain>
    </source>
</reference>
<comment type="function">
    <text evidence="1">This b-type cytochrome is tightly associated with the reaction center of photosystem II (PSII). PSII is a light-driven water:plastoquinone oxidoreductase that uses light energy to abstract electrons from H(2)O, generating O(2) and a proton gradient subsequently used for ATP formation. It consists of a core antenna complex that captures photons, and an electron transfer chain that converts photonic excitation into a charge separation.</text>
</comment>
<comment type="cofactor">
    <cofactor evidence="1">
        <name>heme b</name>
        <dbReference type="ChEBI" id="CHEBI:60344"/>
    </cofactor>
    <text evidence="1">With its partner (PsbF) binds heme. PSII binds additional chlorophylls, carotenoids and specific lipids.</text>
</comment>
<comment type="subunit">
    <text evidence="1">Heterodimer of an alpha subunit and a beta subunit. PSII is composed of 1 copy each of membrane proteins PsbA, PsbB, PsbC, PsbD, PsbE, PsbF, PsbH, PsbI, PsbJ, PsbK, PsbL, PsbM, PsbT, PsbX, PsbY, PsbZ, Psb30/Ycf12, at least 3 peripheral proteins of the oxygen-evolving complex and a large number of cofactors. It forms dimeric complexes.</text>
</comment>
<comment type="subcellular location">
    <subcellularLocation>
        <location evidence="1">Plastid</location>
        <location evidence="1">Chloroplast thylakoid membrane</location>
        <topology evidence="1">Single-pass membrane protein</topology>
    </subcellularLocation>
</comment>
<comment type="similarity">
    <text evidence="1">Belongs to the PsbE/PsbF family.</text>
</comment>